<proteinExistence type="inferred from homology"/>
<sequence>MKLKELMQAIPVYTGEASAAIEVNQIAQDSRKVQPGTLFICIDGEIVDGHQFADRAVQLGAVAIIAEKQLDVSVPVLYVRDSKRAMAMLADYFYGSPTQALKLVGITGTNGKTTVSHLVEQIVRENGEQTGLIGTMYRKIGDEILETKNTTPDSLTLQETFRDMLLSGVSTAVMEVSSHALVQGRVYGSDYDVAVFMNLSQDHLDYHHTMEEYAYAKSLLFAQLGNSYNLSNPKIAVLNADDKESVRMQTATAAHIITFGIKEPADFSASNIQITSHGSTFDLKTPVGDFALKIKMIGNFSVYNVLAAIATSFALRIPVINAIATVESIPGVKGRFELVNAGQDFPVIVDYSHTPDSLLNVLQTIDEFAEKRVFVVVGCGGDRDKGKRPQMAKIAVDYATNPIFTSDNPRSEDPHAIIEDMIQGVPGSDSYVVHENRRDAIRYAVNMAEAGDVILIAGKGHEDYQVIGDEVIDFDDRVEARIAIEKKLGLA</sequence>
<reference key="1">
    <citation type="journal article" date="2001" name="Science">
        <title>Comparative genomics of Listeria species.</title>
        <authorList>
            <person name="Glaser P."/>
            <person name="Frangeul L."/>
            <person name="Buchrieser C."/>
            <person name="Rusniok C."/>
            <person name="Amend A."/>
            <person name="Baquero F."/>
            <person name="Berche P."/>
            <person name="Bloecker H."/>
            <person name="Brandt P."/>
            <person name="Chakraborty T."/>
            <person name="Charbit A."/>
            <person name="Chetouani F."/>
            <person name="Couve E."/>
            <person name="de Daruvar A."/>
            <person name="Dehoux P."/>
            <person name="Domann E."/>
            <person name="Dominguez-Bernal G."/>
            <person name="Duchaud E."/>
            <person name="Durant L."/>
            <person name="Dussurget O."/>
            <person name="Entian K.-D."/>
            <person name="Fsihi H."/>
            <person name="Garcia-del Portillo F."/>
            <person name="Garrido P."/>
            <person name="Gautier L."/>
            <person name="Goebel W."/>
            <person name="Gomez-Lopez N."/>
            <person name="Hain T."/>
            <person name="Hauf J."/>
            <person name="Jackson D."/>
            <person name="Jones L.-M."/>
            <person name="Kaerst U."/>
            <person name="Kreft J."/>
            <person name="Kuhn M."/>
            <person name="Kunst F."/>
            <person name="Kurapkat G."/>
            <person name="Madueno E."/>
            <person name="Maitournam A."/>
            <person name="Mata Vicente J."/>
            <person name="Ng E."/>
            <person name="Nedjari H."/>
            <person name="Nordsiek G."/>
            <person name="Novella S."/>
            <person name="de Pablos B."/>
            <person name="Perez-Diaz J.-C."/>
            <person name="Purcell R."/>
            <person name="Remmel B."/>
            <person name="Rose M."/>
            <person name="Schlueter T."/>
            <person name="Simoes N."/>
            <person name="Tierrez A."/>
            <person name="Vazquez-Boland J.-A."/>
            <person name="Voss H."/>
            <person name="Wehland J."/>
            <person name="Cossart P."/>
        </authorList>
    </citation>
    <scope>NUCLEOTIDE SEQUENCE [LARGE SCALE GENOMIC DNA]</scope>
    <source>
        <strain>ATCC BAA-680 / CLIP 11262</strain>
    </source>
</reference>
<gene>
    <name evidence="1" type="primary">murE</name>
    <name type="ordered locus">lin2144</name>
</gene>
<evidence type="ECO:0000255" key="1">
    <source>
        <dbReference type="HAMAP-Rule" id="MF_00208"/>
    </source>
</evidence>
<comment type="function">
    <text evidence="1">Catalyzes the addition of meso-diaminopimelic acid to the nucleotide precursor UDP-N-acetylmuramoyl-L-alanyl-D-glutamate (UMAG) in the biosynthesis of bacterial cell-wall peptidoglycan.</text>
</comment>
<comment type="catalytic activity">
    <reaction evidence="1">
        <text>UDP-N-acetyl-alpha-D-muramoyl-L-alanyl-D-glutamate + meso-2,6-diaminopimelate + ATP = UDP-N-acetyl-alpha-D-muramoyl-L-alanyl-gamma-D-glutamyl-meso-2,6-diaminopimelate + ADP + phosphate + H(+)</text>
        <dbReference type="Rhea" id="RHEA:23676"/>
        <dbReference type="ChEBI" id="CHEBI:15378"/>
        <dbReference type="ChEBI" id="CHEBI:30616"/>
        <dbReference type="ChEBI" id="CHEBI:43474"/>
        <dbReference type="ChEBI" id="CHEBI:57791"/>
        <dbReference type="ChEBI" id="CHEBI:83900"/>
        <dbReference type="ChEBI" id="CHEBI:83905"/>
        <dbReference type="ChEBI" id="CHEBI:456216"/>
        <dbReference type="EC" id="6.3.2.13"/>
    </reaction>
</comment>
<comment type="cofactor">
    <cofactor evidence="1">
        <name>Mg(2+)</name>
        <dbReference type="ChEBI" id="CHEBI:18420"/>
    </cofactor>
</comment>
<comment type="pathway">
    <text evidence="1">Cell wall biogenesis; peptidoglycan biosynthesis.</text>
</comment>
<comment type="subcellular location">
    <subcellularLocation>
        <location evidence="1">Cytoplasm</location>
    </subcellularLocation>
</comment>
<comment type="PTM">
    <text evidence="1">Carboxylation is probably crucial for Mg(2+) binding and, consequently, for the gamma-phosphate positioning of ATP.</text>
</comment>
<comment type="similarity">
    <text evidence="1">Belongs to the MurCDEF family. MurE subfamily.</text>
</comment>
<protein>
    <recommendedName>
        <fullName evidence="1">UDP-N-acetylmuramoyl-L-alanyl-D-glutamate--2,6-diaminopimelate ligase</fullName>
        <ecNumber evidence="1">6.3.2.13</ecNumber>
    </recommendedName>
    <alternativeName>
        <fullName evidence="1">Meso-A2pm-adding enzyme</fullName>
    </alternativeName>
    <alternativeName>
        <fullName evidence="1">Meso-diaminopimelate-adding enzyme</fullName>
    </alternativeName>
    <alternativeName>
        <fullName evidence="1">UDP-MurNAc-L-Ala-D-Glu:meso-diaminopimelate ligase</fullName>
    </alternativeName>
    <alternativeName>
        <fullName evidence="1">UDP-MurNAc-tripeptide synthetase</fullName>
    </alternativeName>
    <alternativeName>
        <fullName evidence="1">UDP-N-acetylmuramyl-tripeptide synthetase</fullName>
    </alternativeName>
</protein>
<organism>
    <name type="scientific">Listeria innocua serovar 6a (strain ATCC BAA-680 / CLIP 11262)</name>
    <dbReference type="NCBI Taxonomy" id="272626"/>
    <lineage>
        <taxon>Bacteria</taxon>
        <taxon>Bacillati</taxon>
        <taxon>Bacillota</taxon>
        <taxon>Bacilli</taxon>
        <taxon>Bacillales</taxon>
        <taxon>Listeriaceae</taxon>
        <taxon>Listeria</taxon>
    </lineage>
</organism>
<accession>Q929X9</accession>
<dbReference type="EC" id="6.3.2.13" evidence="1"/>
<dbReference type="EMBL" id="AL596171">
    <property type="protein sequence ID" value="CAC97374.1"/>
    <property type="molecule type" value="Genomic_DNA"/>
</dbReference>
<dbReference type="PIR" id="AF1700">
    <property type="entry name" value="AF1700"/>
</dbReference>
<dbReference type="RefSeq" id="WP_010991030.1">
    <property type="nucleotide sequence ID" value="NC_003212.1"/>
</dbReference>
<dbReference type="SMR" id="Q929X9"/>
<dbReference type="STRING" id="272626.gene:17566502"/>
<dbReference type="GeneID" id="93235483"/>
<dbReference type="KEGG" id="lin:murE"/>
<dbReference type="eggNOG" id="COG0769">
    <property type="taxonomic scope" value="Bacteria"/>
</dbReference>
<dbReference type="HOGENOM" id="CLU_022291_4_1_9"/>
<dbReference type="OrthoDB" id="9800958at2"/>
<dbReference type="UniPathway" id="UPA00219"/>
<dbReference type="Proteomes" id="UP000002513">
    <property type="component" value="Chromosome"/>
</dbReference>
<dbReference type="GO" id="GO:0005737">
    <property type="term" value="C:cytoplasm"/>
    <property type="evidence" value="ECO:0007669"/>
    <property type="project" value="UniProtKB-SubCell"/>
</dbReference>
<dbReference type="GO" id="GO:0005524">
    <property type="term" value="F:ATP binding"/>
    <property type="evidence" value="ECO:0007669"/>
    <property type="project" value="UniProtKB-UniRule"/>
</dbReference>
<dbReference type="GO" id="GO:0000287">
    <property type="term" value="F:magnesium ion binding"/>
    <property type="evidence" value="ECO:0007669"/>
    <property type="project" value="UniProtKB-UniRule"/>
</dbReference>
<dbReference type="GO" id="GO:0004326">
    <property type="term" value="F:tetrahydrofolylpolyglutamate synthase activity"/>
    <property type="evidence" value="ECO:0007669"/>
    <property type="project" value="InterPro"/>
</dbReference>
<dbReference type="GO" id="GO:0008765">
    <property type="term" value="F:UDP-N-acetylmuramoylalanyl-D-glutamate-2,6-diaminopimelate ligase activity"/>
    <property type="evidence" value="ECO:0007669"/>
    <property type="project" value="UniProtKB-UniRule"/>
</dbReference>
<dbReference type="GO" id="GO:0051301">
    <property type="term" value="P:cell division"/>
    <property type="evidence" value="ECO:0007669"/>
    <property type="project" value="UniProtKB-KW"/>
</dbReference>
<dbReference type="GO" id="GO:0071555">
    <property type="term" value="P:cell wall organization"/>
    <property type="evidence" value="ECO:0007669"/>
    <property type="project" value="UniProtKB-KW"/>
</dbReference>
<dbReference type="GO" id="GO:0009252">
    <property type="term" value="P:peptidoglycan biosynthetic process"/>
    <property type="evidence" value="ECO:0007669"/>
    <property type="project" value="UniProtKB-UniRule"/>
</dbReference>
<dbReference type="GO" id="GO:0008360">
    <property type="term" value="P:regulation of cell shape"/>
    <property type="evidence" value="ECO:0007669"/>
    <property type="project" value="UniProtKB-KW"/>
</dbReference>
<dbReference type="FunFam" id="3.40.1390.10:FF:000005">
    <property type="entry name" value="UDP-N-acetylmuramoyl-L-alanyl-D-glutamate--2,6-diaminopimelate ligase"/>
    <property type="match status" value="1"/>
</dbReference>
<dbReference type="FunFam" id="3.90.190.20:FF:000006">
    <property type="entry name" value="UDP-N-acetylmuramoyl-L-alanyl-D-glutamate--2,6-diaminopimelate ligase"/>
    <property type="match status" value="1"/>
</dbReference>
<dbReference type="Gene3D" id="3.90.190.20">
    <property type="entry name" value="Mur ligase, C-terminal domain"/>
    <property type="match status" value="1"/>
</dbReference>
<dbReference type="Gene3D" id="3.40.1190.10">
    <property type="entry name" value="Mur-like, catalytic domain"/>
    <property type="match status" value="1"/>
</dbReference>
<dbReference type="Gene3D" id="3.40.1390.10">
    <property type="entry name" value="MurE/MurF, N-terminal domain"/>
    <property type="match status" value="1"/>
</dbReference>
<dbReference type="HAMAP" id="MF_00208">
    <property type="entry name" value="MurE"/>
    <property type="match status" value="1"/>
</dbReference>
<dbReference type="InterPro" id="IPR018109">
    <property type="entry name" value="Folylpolyglutamate_synth_CS"/>
</dbReference>
<dbReference type="InterPro" id="IPR036565">
    <property type="entry name" value="Mur-like_cat_sf"/>
</dbReference>
<dbReference type="InterPro" id="IPR004101">
    <property type="entry name" value="Mur_ligase_C"/>
</dbReference>
<dbReference type="InterPro" id="IPR036615">
    <property type="entry name" value="Mur_ligase_C_dom_sf"/>
</dbReference>
<dbReference type="InterPro" id="IPR013221">
    <property type="entry name" value="Mur_ligase_cen"/>
</dbReference>
<dbReference type="InterPro" id="IPR000713">
    <property type="entry name" value="Mur_ligase_N"/>
</dbReference>
<dbReference type="InterPro" id="IPR035911">
    <property type="entry name" value="MurE/MurF_N"/>
</dbReference>
<dbReference type="InterPro" id="IPR005761">
    <property type="entry name" value="UDP-N-AcMur-Glu-dNH2Pim_ligase"/>
</dbReference>
<dbReference type="NCBIfam" id="TIGR01085">
    <property type="entry name" value="murE"/>
    <property type="match status" value="1"/>
</dbReference>
<dbReference type="NCBIfam" id="NF001124">
    <property type="entry name" value="PRK00139.1-2"/>
    <property type="match status" value="1"/>
</dbReference>
<dbReference type="NCBIfam" id="NF001126">
    <property type="entry name" value="PRK00139.1-4"/>
    <property type="match status" value="1"/>
</dbReference>
<dbReference type="PANTHER" id="PTHR23135">
    <property type="entry name" value="MUR LIGASE FAMILY MEMBER"/>
    <property type="match status" value="1"/>
</dbReference>
<dbReference type="PANTHER" id="PTHR23135:SF4">
    <property type="entry name" value="UDP-N-ACETYLMURAMOYL-L-ALANYL-D-GLUTAMATE--2,6-DIAMINOPIMELATE LIGASE MURE HOMOLOG, CHLOROPLASTIC"/>
    <property type="match status" value="1"/>
</dbReference>
<dbReference type="Pfam" id="PF01225">
    <property type="entry name" value="Mur_ligase"/>
    <property type="match status" value="1"/>
</dbReference>
<dbReference type="Pfam" id="PF02875">
    <property type="entry name" value="Mur_ligase_C"/>
    <property type="match status" value="1"/>
</dbReference>
<dbReference type="Pfam" id="PF08245">
    <property type="entry name" value="Mur_ligase_M"/>
    <property type="match status" value="1"/>
</dbReference>
<dbReference type="SUPFAM" id="SSF53623">
    <property type="entry name" value="MurD-like peptide ligases, catalytic domain"/>
    <property type="match status" value="1"/>
</dbReference>
<dbReference type="SUPFAM" id="SSF53244">
    <property type="entry name" value="MurD-like peptide ligases, peptide-binding domain"/>
    <property type="match status" value="1"/>
</dbReference>
<dbReference type="SUPFAM" id="SSF63418">
    <property type="entry name" value="MurE/MurF N-terminal domain"/>
    <property type="match status" value="1"/>
</dbReference>
<keyword id="KW-0067">ATP-binding</keyword>
<keyword id="KW-0131">Cell cycle</keyword>
<keyword id="KW-0132">Cell division</keyword>
<keyword id="KW-0133">Cell shape</keyword>
<keyword id="KW-0961">Cell wall biogenesis/degradation</keyword>
<keyword id="KW-0963">Cytoplasm</keyword>
<keyword id="KW-0436">Ligase</keyword>
<keyword id="KW-0460">Magnesium</keyword>
<keyword id="KW-0547">Nucleotide-binding</keyword>
<keyword id="KW-0573">Peptidoglycan synthesis</keyword>
<name>MURE_LISIN</name>
<feature type="chain" id="PRO_0000101909" description="UDP-N-acetylmuramoyl-L-alanyl-D-glutamate--2,6-diaminopimelate ligase">
    <location>
        <begin position="1"/>
        <end position="491"/>
    </location>
</feature>
<feature type="short sequence motif" description="Meso-diaminopimelate recognition motif">
    <location>
        <begin position="407"/>
        <end position="410"/>
    </location>
</feature>
<feature type="binding site" evidence="1">
    <location>
        <position position="30"/>
    </location>
    <ligand>
        <name>UDP-N-acetyl-alpha-D-muramoyl-L-alanyl-D-glutamate</name>
        <dbReference type="ChEBI" id="CHEBI:83900"/>
    </ligand>
</feature>
<feature type="binding site" evidence="1">
    <location>
        <begin position="108"/>
        <end position="114"/>
    </location>
    <ligand>
        <name>ATP</name>
        <dbReference type="ChEBI" id="CHEBI:30616"/>
    </ligand>
</feature>
<feature type="binding site" evidence="1">
    <location>
        <position position="149"/>
    </location>
    <ligand>
        <name>UDP-N-acetyl-alpha-D-muramoyl-L-alanyl-D-glutamate</name>
        <dbReference type="ChEBI" id="CHEBI:83900"/>
    </ligand>
</feature>
<feature type="binding site" evidence="1">
    <location>
        <begin position="150"/>
        <end position="151"/>
    </location>
    <ligand>
        <name>UDP-N-acetyl-alpha-D-muramoyl-L-alanyl-D-glutamate</name>
        <dbReference type="ChEBI" id="CHEBI:83900"/>
    </ligand>
</feature>
<feature type="binding site" evidence="1">
    <location>
        <position position="177"/>
    </location>
    <ligand>
        <name>UDP-N-acetyl-alpha-D-muramoyl-L-alanyl-D-glutamate</name>
        <dbReference type="ChEBI" id="CHEBI:83900"/>
    </ligand>
</feature>
<feature type="binding site" evidence="1">
    <location>
        <position position="183"/>
    </location>
    <ligand>
        <name>UDP-N-acetyl-alpha-D-muramoyl-L-alanyl-D-glutamate</name>
        <dbReference type="ChEBI" id="CHEBI:83900"/>
    </ligand>
</feature>
<feature type="binding site" evidence="1">
    <location>
        <position position="185"/>
    </location>
    <ligand>
        <name>UDP-N-acetyl-alpha-D-muramoyl-L-alanyl-D-glutamate</name>
        <dbReference type="ChEBI" id="CHEBI:83900"/>
    </ligand>
</feature>
<feature type="binding site" evidence="1">
    <location>
        <position position="383"/>
    </location>
    <ligand>
        <name>meso-2,6-diaminopimelate</name>
        <dbReference type="ChEBI" id="CHEBI:57791"/>
    </ligand>
</feature>
<feature type="binding site" evidence="1">
    <location>
        <begin position="407"/>
        <end position="410"/>
    </location>
    <ligand>
        <name>meso-2,6-diaminopimelate</name>
        <dbReference type="ChEBI" id="CHEBI:57791"/>
    </ligand>
</feature>
<feature type="binding site" evidence="1">
    <location>
        <position position="458"/>
    </location>
    <ligand>
        <name>meso-2,6-diaminopimelate</name>
        <dbReference type="ChEBI" id="CHEBI:57791"/>
    </ligand>
</feature>
<feature type="binding site" evidence="1">
    <location>
        <position position="462"/>
    </location>
    <ligand>
        <name>meso-2,6-diaminopimelate</name>
        <dbReference type="ChEBI" id="CHEBI:57791"/>
    </ligand>
</feature>
<feature type="modified residue" description="N6-carboxylysine" evidence="1">
    <location>
        <position position="217"/>
    </location>
</feature>